<reference key="1">
    <citation type="journal article" date="2009" name="Appl. Environ. Microbiol.">
        <title>Complete genome sequence of the chemolithoautotrophic marine magnetotactic coccus strain MC-1.</title>
        <authorList>
            <person name="Schubbe S."/>
            <person name="Williams T.J."/>
            <person name="Xie G."/>
            <person name="Kiss H.E."/>
            <person name="Brettin T.S."/>
            <person name="Martinez D."/>
            <person name="Ross C.A."/>
            <person name="Schuler D."/>
            <person name="Cox B.L."/>
            <person name="Nealson K.H."/>
            <person name="Bazylinski D.A."/>
        </authorList>
    </citation>
    <scope>NUCLEOTIDE SEQUENCE [LARGE SCALE GENOMIC DNA]</scope>
    <source>
        <strain>ATCC BAA-1437 / JCM 17883 / MC-1</strain>
    </source>
</reference>
<accession>A0L9S5</accession>
<proteinExistence type="inferred from homology"/>
<feature type="chain" id="PRO_0000366468" description="Ribosomal RNA large subunit methyltransferase G">
    <location>
        <begin position="1"/>
        <end position="369"/>
    </location>
</feature>
<evidence type="ECO:0000255" key="1">
    <source>
        <dbReference type="HAMAP-Rule" id="MF_01859"/>
    </source>
</evidence>
<gene>
    <name evidence="1" type="primary">rlmG</name>
    <name type="ordered locus">Mmc1_2217</name>
</gene>
<organism>
    <name type="scientific">Magnetococcus marinus (strain ATCC BAA-1437 / JCM 17883 / MC-1)</name>
    <dbReference type="NCBI Taxonomy" id="156889"/>
    <lineage>
        <taxon>Bacteria</taxon>
        <taxon>Pseudomonadati</taxon>
        <taxon>Pseudomonadota</taxon>
        <taxon>Alphaproteobacteria</taxon>
        <taxon>Magnetococcales</taxon>
        <taxon>Magnetococcaceae</taxon>
        <taxon>Magnetococcus</taxon>
    </lineage>
</organism>
<protein>
    <recommendedName>
        <fullName evidence="1">Ribosomal RNA large subunit methyltransferase G</fullName>
        <ecNumber evidence="1">2.1.1.174</ecNumber>
    </recommendedName>
    <alternativeName>
        <fullName evidence="1">23S rRNA m2G1835 methyltransferase</fullName>
    </alternativeName>
    <alternativeName>
        <fullName evidence="1">rRNA (guanine-N(2)-)-methyltransferase RlmG</fullName>
    </alternativeName>
</protein>
<name>RLMG_MAGMM</name>
<sequence>MQHLNIHGHTLTLRRFPHKPGCPLQAWDAADALALTNHALPDGEILILNDHFGALACGLAYPERTLEWVNDSYMAHQALAQNLQLNRIETPLHRTPALAASPTNPVGILIKLPRMLQLLSSQLDWLNLHLPKGTPVVIAARQKDMPSTLPDLTRRLLDDVHPSRAEKKARLIFGQLSGRQSGQAEITAWHCAELDCLLSHYPNVFGRQKLDLGARVLLQNLGTIPDQVVDLGCGNGVLSIAALQRNPNSHVLAVDESWQATRSCQINLERVRTPEHFKVVWGHSLSFIEGMQADLVLCNPPFHQHQTLTDDIAWCMFKDAHRVLKPGGRLRMVGNRHLGYHAKLHKLFGHCRSIAATPKFVVLESVKSS</sequence>
<dbReference type="EC" id="2.1.1.174" evidence="1"/>
<dbReference type="EMBL" id="CP000471">
    <property type="protein sequence ID" value="ABK44718.1"/>
    <property type="molecule type" value="Genomic_DNA"/>
</dbReference>
<dbReference type="RefSeq" id="WP_011713839.1">
    <property type="nucleotide sequence ID" value="NC_008576.1"/>
</dbReference>
<dbReference type="SMR" id="A0L9S5"/>
<dbReference type="STRING" id="156889.Mmc1_2217"/>
<dbReference type="KEGG" id="mgm:Mmc1_2217"/>
<dbReference type="eggNOG" id="COG2813">
    <property type="taxonomic scope" value="Bacteria"/>
</dbReference>
<dbReference type="HOGENOM" id="CLU_040288_4_0_5"/>
<dbReference type="OrthoDB" id="9816072at2"/>
<dbReference type="Proteomes" id="UP000002586">
    <property type="component" value="Chromosome"/>
</dbReference>
<dbReference type="GO" id="GO:0005737">
    <property type="term" value="C:cytoplasm"/>
    <property type="evidence" value="ECO:0007669"/>
    <property type="project" value="UniProtKB-SubCell"/>
</dbReference>
<dbReference type="GO" id="GO:0052916">
    <property type="term" value="F:23S rRNA (guanine(1835)-N(2))-methyltransferase activity"/>
    <property type="evidence" value="ECO:0007669"/>
    <property type="project" value="UniProtKB-EC"/>
</dbReference>
<dbReference type="GO" id="GO:0003676">
    <property type="term" value="F:nucleic acid binding"/>
    <property type="evidence" value="ECO:0007669"/>
    <property type="project" value="InterPro"/>
</dbReference>
<dbReference type="CDD" id="cd02440">
    <property type="entry name" value="AdoMet_MTases"/>
    <property type="match status" value="1"/>
</dbReference>
<dbReference type="Gene3D" id="3.40.50.150">
    <property type="entry name" value="Vaccinia Virus protein VP39"/>
    <property type="match status" value="2"/>
</dbReference>
<dbReference type="HAMAP" id="MF_01859">
    <property type="entry name" value="23SrRNA_methyltr_G"/>
    <property type="match status" value="1"/>
</dbReference>
<dbReference type="InterPro" id="IPR002052">
    <property type="entry name" value="DNA_methylase_N6_adenine_CS"/>
</dbReference>
<dbReference type="InterPro" id="IPR017237">
    <property type="entry name" value="rRNA_m2G-MeTrfase_RlmG"/>
</dbReference>
<dbReference type="InterPro" id="IPR046977">
    <property type="entry name" value="RsmC/RlmG"/>
</dbReference>
<dbReference type="InterPro" id="IPR029063">
    <property type="entry name" value="SAM-dependent_MTases_sf"/>
</dbReference>
<dbReference type="InterPro" id="IPR007848">
    <property type="entry name" value="Small_mtfrase_dom"/>
</dbReference>
<dbReference type="PANTHER" id="PTHR47816:SF5">
    <property type="entry name" value="RIBOSOMAL RNA LARGE SUBUNIT METHYLTRANSFERASE G"/>
    <property type="match status" value="1"/>
</dbReference>
<dbReference type="PANTHER" id="PTHR47816">
    <property type="entry name" value="RIBOSOMAL RNA SMALL SUBUNIT METHYLTRANSFERASE C"/>
    <property type="match status" value="1"/>
</dbReference>
<dbReference type="Pfam" id="PF05175">
    <property type="entry name" value="MTS"/>
    <property type="match status" value="1"/>
</dbReference>
<dbReference type="PIRSF" id="PIRSF037565">
    <property type="entry name" value="RRNA_m2G_Mtase_RsmD_prd"/>
    <property type="match status" value="1"/>
</dbReference>
<dbReference type="SUPFAM" id="SSF53335">
    <property type="entry name" value="S-adenosyl-L-methionine-dependent methyltransferases"/>
    <property type="match status" value="1"/>
</dbReference>
<keyword id="KW-0963">Cytoplasm</keyword>
<keyword id="KW-0489">Methyltransferase</keyword>
<keyword id="KW-1185">Reference proteome</keyword>
<keyword id="KW-0698">rRNA processing</keyword>
<keyword id="KW-0949">S-adenosyl-L-methionine</keyword>
<keyword id="KW-0808">Transferase</keyword>
<comment type="function">
    <text evidence="1">Specifically methylates the guanine in position 1835 (m2G1835) of 23S rRNA.</text>
</comment>
<comment type="catalytic activity">
    <reaction evidence="1">
        <text>guanosine(1835) in 23S rRNA + S-adenosyl-L-methionine = N(2)-methylguanosine(1835) in 23S rRNA + S-adenosyl-L-homocysteine + H(+)</text>
        <dbReference type="Rhea" id="RHEA:42744"/>
        <dbReference type="Rhea" id="RHEA-COMP:10217"/>
        <dbReference type="Rhea" id="RHEA-COMP:10218"/>
        <dbReference type="ChEBI" id="CHEBI:15378"/>
        <dbReference type="ChEBI" id="CHEBI:57856"/>
        <dbReference type="ChEBI" id="CHEBI:59789"/>
        <dbReference type="ChEBI" id="CHEBI:74269"/>
        <dbReference type="ChEBI" id="CHEBI:74481"/>
        <dbReference type="EC" id="2.1.1.174"/>
    </reaction>
</comment>
<comment type="subcellular location">
    <subcellularLocation>
        <location evidence="1">Cytoplasm</location>
    </subcellularLocation>
</comment>
<comment type="similarity">
    <text evidence="1">Belongs to the methyltransferase superfamily. RlmG family.</text>
</comment>